<sequence length="98" mass="10677">MPSISTNIILAFTTALLGTLIYRSHLMSSLLCLEGMMLSMFILTSLTTLNLHFSLTTMAPIILLVFAACEAAIGLALLVMVSNTYGMDYIQNLNLLQC</sequence>
<protein>
    <recommendedName>
        <fullName>NADH-ubiquinone oxidoreductase chain 4L</fullName>
        <ecNumber>7.1.1.2</ecNumber>
    </recommendedName>
    <alternativeName>
        <fullName>NADH dehydrogenase subunit 4L</fullName>
    </alternativeName>
</protein>
<accession>Q85DA4</accession>
<feature type="chain" id="PRO_0000275020" description="NADH-ubiquinone oxidoreductase chain 4L">
    <location>
        <begin position="1"/>
        <end position="98"/>
    </location>
</feature>
<feature type="transmembrane region" description="Helical" evidence="3">
    <location>
        <begin position="1"/>
        <end position="21"/>
    </location>
</feature>
<feature type="transmembrane region" description="Helical" evidence="3">
    <location>
        <begin position="26"/>
        <end position="46"/>
    </location>
</feature>
<feature type="transmembrane region" description="Helical" evidence="3">
    <location>
        <begin position="61"/>
        <end position="81"/>
    </location>
</feature>
<geneLocation type="mitochondrion"/>
<organism>
    <name type="scientific">Otolemur crassicaudatus</name>
    <name type="common">Brown greater galago</name>
    <name type="synonym">Galago crassicaudatus</name>
    <dbReference type="NCBI Taxonomy" id="9463"/>
    <lineage>
        <taxon>Eukaryota</taxon>
        <taxon>Metazoa</taxon>
        <taxon>Chordata</taxon>
        <taxon>Craniata</taxon>
        <taxon>Vertebrata</taxon>
        <taxon>Euteleostomi</taxon>
        <taxon>Mammalia</taxon>
        <taxon>Eutheria</taxon>
        <taxon>Euarchontoglires</taxon>
        <taxon>Primates</taxon>
        <taxon>Strepsirrhini</taxon>
        <taxon>Lorisiformes</taxon>
        <taxon>Galagidae</taxon>
        <taxon>Otolemur</taxon>
    </lineage>
</organism>
<proteinExistence type="inferred from homology"/>
<name>NU4LM_OTOCR</name>
<comment type="function">
    <text evidence="1">Core subunit of the mitochondrial membrane respiratory chain NADH dehydrogenase (Complex I) which catalyzes electron transfer from NADH through the respiratory chain, using ubiquinone as an electron acceptor. Part of the enzyme membrane arm which is embedded in the lipid bilayer and involved in proton translocation.</text>
</comment>
<comment type="catalytic activity">
    <reaction evidence="1">
        <text>a ubiquinone + NADH + 5 H(+)(in) = a ubiquinol + NAD(+) + 4 H(+)(out)</text>
        <dbReference type="Rhea" id="RHEA:29091"/>
        <dbReference type="Rhea" id="RHEA-COMP:9565"/>
        <dbReference type="Rhea" id="RHEA-COMP:9566"/>
        <dbReference type="ChEBI" id="CHEBI:15378"/>
        <dbReference type="ChEBI" id="CHEBI:16389"/>
        <dbReference type="ChEBI" id="CHEBI:17976"/>
        <dbReference type="ChEBI" id="CHEBI:57540"/>
        <dbReference type="ChEBI" id="CHEBI:57945"/>
        <dbReference type="EC" id="7.1.1.2"/>
    </reaction>
    <physiologicalReaction direction="left-to-right" evidence="1">
        <dbReference type="Rhea" id="RHEA:29092"/>
    </physiologicalReaction>
</comment>
<comment type="subunit">
    <text evidence="2">Core subunit of respiratory chain NADH dehydrogenase (Complex I) which is composed of 45 different subunits.</text>
</comment>
<comment type="subcellular location">
    <subcellularLocation>
        <location evidence="2">Mitochondrion inner membrane</location>
        <topology evidence="3">Multi-pass membrane protein</topology>
    </subcellularLocation>
</comment>
<comment type="similarity">
    <text evidence="4">Belongs to the complex I subunit 4L family.</text>
</comment>
<gene>
    <name type="primary">MT-ND4L</name>
    <name type="synonym">MTND4L</name>
    <name type="synonym">NADH4L</name>
    <name type="synonym">ND4L</name>
</gene>
<evidence type="ECO:0000250" key="1">
    <source>
        <dbReference type="UniProtKB" id="P03901"/>
    </source>
</evidence>
<evidence type="ECO:0000250" key="2">
    <source>
        <dbReference type="UniProtKB" id="P03902"/>
    </source>
</evidence>
<evidence type="ECO:0000255" key="3"/>
<evidence type="ECO:0000305" key="4"/>
<dbReference type="EC" id="7.1.1.2"/>
<dbReference type="EMBL" id="AF224643">
    <property type="protein sequence ID" value="AAP33658.1"/>
    <property type="molecule type" value="Genomic_DNA"/>
</dbReference>
<dbReference type="RefSeq" id="YP_002929317.1">
    <property type="nucleotide sequence ID" value="NC_012762.1"/>
</dbReference>
<dbReference type="SMR" id="Q85DA4"/>
<dbReference type="GeneID" id="7944341"/>
<dbReference type="CTD" id="4539"/>
<dbReference type="GO" id="GO:0005743">
    <property type="term" value="C:mitochondrial inner membrane"/>
    <property type="evidence" value="ECO:0000250"/>
    <property type="project" value="UniProtKB"/>
</dbReference>
<dbReference type="GO" id="GO:0045271">
    <property type="term" value="C:respiratory chain complex I"/>
    <property type="evidence" value="ECO:0000250"/>
    <property type="project" value="UniProtKB"/>
</dbReference>
<dbReference type="GO" id="GO:0008137">
    <property type="term" value="F:NADH dehydrogenase (ubiquinone) activity"/>
    <property type="evidence" value="ECO:0000250"/>
    <property type="project" value="UniProtKB"/>
</dbReference>
<dbReference type="GO" id="GO:0042773">
    <property type="term" value="P:ATP synthesis coupled electron transport"/>
    <property type="evidence" value="ECO:0007669"/>
    <property type="project" value="InterPro"/>
</dbReference>
<dbReference type="FunFam" id="1.10.287.3510:FF:000002">
    <property type="entry name" value="NADH-ubiquinone oxidoreductase chain 4L"/>
    <property type="match status" value="1"/>
</dbReference>
<dbReference type="Gene3D" id="1.10.287.3510">
    <property type="match status" value="1"/>
</dbReference>
<dbReference type="InterPro" id="IPR001133">
    <property type="entry name" value="NADH_UbQ_OxRdtase_chain4L/K"/>
</dbReference>
<dbReference type="InterPro" id="IPR039428">
    <property type="entry name" value="NUOK/Mnh_C1-like"/>
</dbReference>
<dbReference type="PANTHER" id="PTHR11434:SF0">
    <property type="entry name" value="NADH-UBIQUINONE OXIDOREDUCTASE CHAIN 4L"/>
    <property type="match status" value="1"/>
</dbReference>
<dbReference type="PANTHER" id="PTHR11434">
    <property type="entry name" value="NADH-UBIQUINONE OXIDOREDUCTASE SUBUNIT ND4L"/>
    <property type="match status" value="1"/>
</dbReference>
<dbReference type="Pfam" id="PF00420">
    <property type="entry name" value="Oxidored_q2"/>
    <property type="match status" value="1"/>
</dbReference>
<keyword id="KW-0249">Electron transport</keyword>
<keyword id="KW-0472">Membrane</keyword>
<keyword id="KW-0496">Mitochondrion</keyword>
<keyword id="KW-0999">Mitochondrion inner membrane</keyword>
<keyword id="KW-0520">NAD</keyword>
<keyword id="KW-0679">Respiratory chain</keyword>
<keyword id="KW-1278">Translocase</keyword>
<keyword id="KW-0812">Transmembrane</keyword>
<keyword id="KW-1133">Transmembrane helix</keyword>
<keyword id="KW-0813">Transport</keyword>
<keyword id="KW-0830">Ubiquinone</keyword>
<reference key="1">
    <citation type="journal article" date="2003" name="Proc. Natl. Acad. Sci. U.S.A.">
        <title>A molecular approach to comparative phylogeography of extant Malagasy lemurs.</title>
        <authorList>
            <person name="Pastorini J."/>
            <person name="Thalmann U."/>
            <person name="Martin R.D."/>
        </authorList>
    </citation>
    <scope>NUCLEOTIDE SEQUENCE [GENOMIC DNA]</scope>
</reference>